<proteinExistence type="evidence at protein level"/>
<reference key="1">
    <citation type="journal article" date="2004" name="Nature">
        <title>Genome sequence of the Brown Norway rat yields insights into mammalian evolution.</title>
        <authorList>
            <person name="Gibbs R.A."/>
            <person name="Weinstock G.M."/>
            <person name="Metzker M.L."/>
            <person name="Muzny D.M."/>
            <person name="Sodergren E.J."/>
            <person name="Scherer S."/>
            <person name="Scott G."/>
            <person name="Steffen D."/>
            <person name="Worley K.C."/>
            <person name="Burch P.E."/>
            <person name="Okwuonu G."/>
            <person name="Hines S."/>
            <person name="Lewis L."/>
            <person name="Deramo C."/>
            <person name="Delgado O."/>
            <person name="Dugan-Rocha S."/>
            <person name="Miner G."/>
            <person name="Morgan M."/>
            <person name="Hawes A."/>
            <person name="Gill R."/>
            <person name="Holt R.A."/>
            <person name="Adams M.D."/>
            <person name="Amanatides P.G."/>
            <person name="Baden-Tillson H."/>
            <person name="Barnstead M."/>
            <person name="Chin S."/>
            <person name="Evans C.A."/>
            <person name="Ferriera S."/>
            <person name="Fosler C."/>
            <person name="Glodek A."/>
            <person name="Gu Z."/>
            <person name="Jennings D."/>
            <person name="Kraft C.L."/>
            <person name="Nguyen T."/>
            <person name="Pfannkoch C.M."/>
            <person name="Sitter C."/>
            <person name="Sutton G.G."/>
            <person name="Venter J.C."/>
            <person name="Woodage T."/>
            <person name="Smith D."/>
            <person name="Lee H.-M."/>
            <person name="Gustafson E."/>
            <person name="Cahill P."/>
            <person name="Kana A."/>
            <person name="Doucette-Stamm L."/>
            <person name="Weinstock K."/>
            <person name="Fechtel K."/>
            <person name="Weiss R.B."/>
            <person name="Dunn D.M."/>
            <person name="Green E.D."/>
            <person name="Blakesley R.W."/>
            <person name="Bouffard G.G."/>
            <person name="De Jong P.J."/>
            <person name="Osoegawa K."/>
            <person name="Zhu B."/>
            <person name="Marra M."/>
            <person name="Schein J."/>
            <person name="Bosdet I."/>
            <person name="Fjell C."/>
            <person name="Jones S."/>
            <person name="Krzywinski M."/>
            <person name="Mathewson C."/>
            <person name="Siddiqui A."/>
            <person name="Wye N."/>
            <person name="McPherson J."/>
            <person name="Zhao S."/>
            <person name="Fraser C.M."/>
            <person name="Shetty J."/>
            <person name="Shatsman S."/>
            <person name="Geer K."/>
            <person name="Chen Y."/>
            <person name="Abramzon S."/>
            <person name="Nierman W.C."/>
            <person name="Havlak P.H."/>
            <person name="Chen R."/>
            <person name="Durbin K.J."/>
            <person name="Egan A."/>
            <person name="Ren Y."/>
            <person name="Song X.-Z."/>
            <person name="Li B."/>
            <person name="Liu Y."/>
            <person name="Qin X."/>
            <person name="Cawley S."/>
            <person name="Cooney A.J."/>
            <person name="D'Souza L.M."/>
            <person name="Martin K."/>
            <person name="Wu J.Q."/>
            <person name="Gonzalez-Garay M.L."/>
            <person name="Jackson A.R."/>
            <person name="Kalafus K.J."/>
            <person name="McLeod M.P."/>
            <person name="Milosavljevic A."/>
            <person name="Virk D."/>
            <person name="Volkov A."/>
            <person name="Wheeler D.A."/>
            <person name="Zhang Z."/>
            <person name="Bailey J.A."/>
            <person name="Eichler E.E."/>
            <person name="Tuzun E."/>
            <person name="Birney E."/>
            <person name="Mongin E."/>
            <person name="Ureta-Vidal A."/>
            <person name="Woodwark C."/>
            <person name="Zdobnov E."/>
            <person name="Bork P."/>
            <person name="Suyama M."/>
            <person name="Torrents D."/>
            <person name="Alexandersson M."/>
            <person name="Trask B.J."/>
            <person name="Young J.M."/>
            <person name="Huang H."/>
            <person name="Wang H."/>
            <person name="Xing H."/>
            <person name="Daniels S."/>
            <person name="Gietzen D."/>
            <person name="Schmidt J."/>
            <person name="Stevens K."/>
            <person name="Vitt U."/>
            <person name="Wingrove J."/>
            <person name="Camara F."/>
            <person name="Mar Alba M."/>
            <person name="Abril J.F."/>
            <person name="Guigo R."/>
            <person name="Smit A."/>
            <person name="Dubchak I."/>
            <person name="Rubin E.M."/>
            <person name="Couronne O."/>
            <person name="Poliakov A."/>
            <person name="Huebner N."/>
            <person name="Ganten D."/>
            <person name="Goesele C."/>
            <person name="Hummel O."/>
            <person name="Kreitler T."/>
            <person name="Lee Y.-A."/>
            <person name="Monti J."/>
            <person name="Schulz H."/>
            <person name="Zimdahl H."/>
            <person name="Himmelbauer H."/>
            <person name="Lehrach H."/>
            <person name="Jacob H.J."/>
            <person name="Bromberg S."/>
            <person name="Gullings-Handley J."/>
            <person name="Jensen-Seaman M.I."/>
            <person name="Kwitek A.E."/>
            <person name="Lazar J."/>
            <person name="Pasko D."/>
            <person name="Tonellato P.J."/>
            <person name="Twigger S."/>
            <person name="Ponting C.P."/>
            <person name="Duarte J.M."/>
            <person name="Rice S."/>
            <person name="Goodstadt L."/>
            <person name="Beatson S.A."/>
            <person name="Emes R.D."/>
            <person name="Winter E.E."/>
            <person name="Webber C."/>
            <person name="Brandt P."/>
            <person name="Nyakatura G."/>
            <person name="Adetobi M."/>
            <person name="Chiaromonte F."/>
            <person name="Elnitski L."/>
            <person name="Eswara P."/>
            <person name="Hardison R.C."/>
            <person name="Hou M."/>
            <person name="Kolbe D."/>
            <person name="Makova K."/>
            <person name="Miller W."/>
            <person name="Nekrutenko A."/>
            <person name="Riemer C."/>
            <person name="Schwartz S."/>
            <person name="Taylor J."/>
            <person name="Yang S."/>
            <person name="Zhang Y."/>
            <person name="Lindpaintner K."/>
            <person name="Andrews T.D."/>
            <person name="Caccamo M."/>
            <person name="Clamp M."/>
            <person name="Clarke L."/>
            <person name="Curwen V."/>
            <person name="Durbin R.M."/>
            <person name="Eyras E."/>
            <person name="Searle S.M."/>
            <person name="Cooper G.M."/>
            <person name="Batzoglou S."/>
            <person name="Brudno M."/>
            <person name="Sidow A."/>
            <person name="Stone E.A."/>
            <person name="Payseur B.A."/>
            <person name="Bourque G."/>
            <person name="Lopez-Otin C."/>
            <person name="Puente X.S."/>
            <person name="Chakrabarti K."/>
            <person name="Chatterji S."/>
            <person name="Dewey C."/>
            <person name="Pachter L."/>
            <person name="Bray N."/>
            <person name="Yap V.B."/>
            <person name="Caspi A."/>
            <person name="Tesler G."/>
            <person name="Pevzner P.A."/>
            <person name="Haussler D."/>
            <person name="Roskin K.M."/>
            <person name="Baertsch R."/>
            <person name="Clawson H."/>
            <person name="Furey T.S."/>
            <person name="Hinrichs A.S."/>
            <person name="Karolchik D."/>
            <person name="Kent W.J."/>
            <person name="Rosenbloom K.R."/>
            <person name="Trumbower H."/>
            <person name="Weirauch M."/>
            <person name="Cooper D.N."/>
            <person name="Stenson P.D."/>
            <person name="Ma B."/>
            <person name="Brent M."/>
            <person name="Arumugam M."/>
            <person name="Shteynberg D."/>
            <person name="Copley R.R."/>
            <person name="Taylor M.S."/>
            <person name="Riethman H."/>
            <person name="Mudunuri U."/>
            <person name="Peterson J."/>
            <person name="Guyer M."/>
            <person name="Felsenfeld A."/>
            <person name="Old S."/>
            <person name="Mockrin S."/>
            <person name="Collins F.S."/>
        </authorList>
    </citation>
    <scope>NUCLEOTIDE SEQUENCE [LARGE SCALE GENOMIC DNA]</scope>
    <source>
        <strain>Brown Norway</strain>
    </source>
</reference>
<reference key="2">
    <citation type="journal article" date="2013" name="Hum. Mol. Genet.">
        <title>Loss of function of KIAA2022 causes mild to severe intellectual disability with an autism spectrum disorder and impairs neurite outgrowth.</title>
        <authorList>
            <person name="Van Maldergem L."/>
            <person name="Hou Q."/>
            <person name="Kalscheuer V.M."/>
            <person name="Rio M."/>
            <person name="Doco-Fenzy M."/>
            <person name="Medeira A."/>
            <person name="de Brouwer A.P."/>
            <person name="Cabrol C."/>
            <person name="Haas S.A."/>
            <person name="Cacciagli P."/>
            <person name="Moutton S."/>
            <person name="Landais E."/>
            <person name="Motte J."/>
            <person name="Colleaux L."/>
            <person name="Bonnet C."/>
            <person name="Villard L."/>
            <person name="Dupont J."/>
            <person name="Man H.Y."/>
        </authorList>
    </citation>
    <scope>FUNCTION IN NEURONAL DEVELOPMENT</scope>
</reference>
<reference key="3">
    <citation type="journal article" date="2012" name="Neuroscience">
        <title>Transient expression of Xpn, an XLMR protein related to neurite extension, during brain development and participation in neurite outgrowth.</title>
        <authorList>
            <person name="Ishikawa T."/>
            <person name="Miyata S."/>
            <person name="Koyama Y."/>
            <person name="Yoshikawa K."/>
            <person name="Hattori T."/>
            <person name="Kumamoto N."/>
            <person name="Shingaki K."/>
            <person name="Katayama T."/>
            <person name="Tohyama M."/>
        </authorList>
    </citation>
    <scope>FUNCTION</scope>
</reference>
<reference key="4">
    <citation type="journal article" date="2013" name="Neurochem. Int.">
        <title>XLMR protein related to neurite extension (Xpn/KIAA2022) regulates cell-cell and cell-matrix adhesion and migration.</title>
        <authorList>
            <person name="Magome T."/>
            <person name="Hattori T."/>
            <person name="Taniguchi M."/>
            <person name="Ishikawa T."/>
            <person name="Miyata S."/>
            <person name="Yamada K."/>
            <person name="Takamura H."/>
            <person name="Matsuzaki S."/>
            <person name="Ito A."/>
            <person name="Tohyama M."/>
            <person name="Katayama T."/>
        </authorList>
    </citation>
    <scope>FUNCTION</scope>
    <scope>SUBCELLULAR LOCATION</scope>
</reference>
<reference key="5">
    <citation type="journal article" date="2016" name="ENeuro">
        <title>The X-linked autism protein KIAA2022/KIDLIA regulates neurite outgrowth via N-cadherin and delta-catenin signaling.</title>
        <authorList>
            <person name="Gilbert J."/>
            <person name="Man H.Y."/>
        </authorList>
    </citation>
    <scope>FUNCTION</scope>
    <scope>SUBCELLULAR LOCATION</scope>
</reference>
<protein>
    <recommendedName>
        <fullName evidence="2">Neurite extension and migration factor</fullName>
    </recommendedName>
    <alternativeName>
        <fullName evidence="9">KIAA2022 protein associated with intellectual disability, language impairment and autistic behavior homolog</fullName>
        <shortName evidence="9">KIDLIA</shortName>
    </alternativeName>
    <alternativeName>
        <fullName evidence="8">XLMR protein related to neurite extension</fullName>
        <shortName evidence="8">Xpn</shortName>
    </alternativeName>
</protein>
<accession>D3ZGX1</accession>
<organism>
    <name type="scientific">Rattus norvegicus</name>
    <name type="common">Rat</name>
    <dbReference type="NCBI Taxonomy" id="10116"/>
    <lineage>
        <taxon>Eukaryota</taxon>
        <taxon>Metazoa</taxon>
        <taxon>Chordata</taxon>
        <taxon>Craniata</taxon>
        <taxon>Vertebrata</taxon>
        <taxon>Euteleostomi</taxon>
        <taxon>Mammalia</taxon>
        <taxon>Eutheria</taxon>
        <taxon>Euarchontoglires</taxon>
        <taxon>Glires</taxon>
        <taxon>Rodentia</taxon>
        <taxon>Myomorpha</taxon>
        <taxon>Muroidea</taxon>
        <taxon>Muridae</taxon>
        <taxon>Murinae</taxon>
        <taxon>Rattus</taxon>
    </lineage>
</organism>
<comment type="function">
    <text evidence="4 5 6 7">Involved in neurite outgrowth by regulating cell-cell adhesion via the N-cadherin signaling pathway (PubMed:22531377, PubMed:23615299, PubMed:24071057, PubMed:27822498). May act by regulating expression of protein-coding genes, such as N-cadherins and integrin beta-1 (ITGB1) (PubMed:24071057, PubMed:27822498).</text>
</comment>
<comment type="subcellular location">
    <subcellularLocation>
        <location evidence="6 7">Nucleus</location>
    </subcellularLocation>
    <subcellularLocation>
        <location evidence="1">Cytoplasm</location>
    </subcellularLocation>
</comment>
<sequence>MDNQQDKVIAASANGENNLINGVKENDSEEQDVAMKSFAALEASTPIQPIPVVQKESPMFPRGLLPLPSKKPCMQSPPSPLGLIEAPDHSATGASVNAISLTSGVAKGLNTWSLPNECEKAPFAIMEPAGISALNGDCLMQPSRTCLGCFMESKEAVDPEPGISLKVGDLNRDYETCAVSDIGIQCINAGENLKYGEQLLSDQLLGFPLHKSRAGDRRESEKPDIDLEDPTQKSYYEALLLDKCNTEEALLANSNQDWGYFETFISESKIELLDLCSKNELSVNLFSEEDVENYMFDDDESTLGSDVCSLKIRYESFQDNVRDKTTLLMQEDAQFNFFPSVFTTCPKRESKSGVLKQSSDLSQFKVPDVSIIWGDEDKNLDKKKGKEEVHEDKSIEKKDEKDNGEKPALNNKPCSGLEVEQFKNLKPDHLTNSLETSGNFSDDSSFIEVSYDAMGEIKDCSRYMARDTNSGSSSSQQNYGLRAKRKVRYSEDYLYDVDSLEGEKVNERKEWPPGGSKEEDDDEWCPKKRRKVTRKEPPVIIKYIIINRFKGEKNMLVKLGKVDASETTVNLSESQLSKYAKLSPLKGFWQKKKKQKNGNTDSVKTPFCQKQSFEPGSFEVSFLPPARKRKSKLGNRHRIQRIQSMEASASSKQVSFGSDQKQASNRKEEGGLKGTPKSALLAAPSSANGSHLRGLIGPDSAKVKAQDTEFKGPERKVLNKIKFKSEARLKSKKIKTGQENKPVVQMSPVSEDPSSKANLKNEVTPGTSNSSHMSEFHETKVVKNSTFLPTTCSSEMPLSSANVATNIPVIPGGYLQTLLDASDLSNNTSISYFTNHSAEQNEASLSQTEKAFAPLQSAQDCVLSSSSDSQLQQSSQNFKMEASNYGSLWPDKDTSGSQEFMTEVSGEIATSQSSEFEATQVVSMENNLTAITYSPVCLNSGGSGCNKVLYASVQDSHLAPDDSYQLCHFNNGEICFPFQQGPISTEDDGQLFSFDSMTPLSVSSSSYCPLSLKSCEKDGDDDINDDFLAHCSPKLVIQQSIDEIAPLKESTDLLDISNFTPDKFRHSSLSEMSPPDTPSLSPQSTRCESIKTLGTMKGFQEGVPGSLSSMEKIKWDCSTLSQQVQADDGFTLNNHQFQFHMFNDEDSVGLLQKNPCLSTFDEPAGQISANNKVSKSRKKTSPGKSGAVSQSSSQKNTRKKSPKASNKGVEKPPSKTSRQVPKSAKKGKYVAAVNGEKMQIGIGHSGGQPNSTSSNGKTLTECIQHGGPVAPMKIPSQKGLSGDWALGKESRPGWNDMSVVTNTNNLLDDDQREFQEPSYILSNIASGMADVQRFMMASMEPLWEPMEHQGESNTFYSPDSNSLKLKTLKILAGTPQESKKKINNGSSGATKNHRSIKAVSKSSGKAAVGDPGHADVSGSSEDSRSAFFDKKYSNMNTLGNNGPTHKKLYRHKSSSKTLRDEKYKGKRVEREQIHKDEAGTTCFEKLRGSSYNLLKAETAFGVLPVFEEETHIFQKDI</sequence>
<evidence type="ECO:0000250" key="1">
    <source>
        <dbReference type="UniProtKB" id="Q5DTT1"/>
    </source>
</evidence>
<evidence type="ECO:0000250" key="2">
    <source>
        <dbReference type="UniProtKB" id="Q5QGS0"/>
    </source>
</evidence>
<evidence type="ECO:0000256" key="3">
    <source>
        <dbReference type="SAM" id="MobiDB-lite"/>
    </source>
</evidence>
<evidence type="ECO:0000269" key="4">
    <source>
    </source>
</evidence>
<evidence type="ECO:0000269" key="5">
    <source>
    </source>
</evidence>
<evidence type="ECO:0000269" key="6">
    <source>
    </source>
</evidence>
<evidence type="ECO:0000269" key="7">
    <source>
    </source>
</evidence>
<evidence type="ECO:0000303" key="8">
    <source>
    </source>
</evidence>
<evidence type="ECO:0000303" key="9">
    <source>
    </source>
</evidence>
<feature type="chain" id="PRO_0000426094" description="Neurite extension and migration factor">
    <location>
        <begin position="1"/>
        <end position="1517"/>
    </location>
</feature>
<feature type="region of interest" description="Disordered" evidence="3">
    <location>
        <begin position="381"/>
        <end position="416"/>
    </location>
</feature>
<feature type="region of interest" description="Disordered" evidence="3">
    <location>
        <begin position="505"/>
        <end position="529"/>
    </location>
</feature>
<feature type="region of interest" description="Disordered" evidence="3">
    <location>
        <begin position="644"/>
        <end position="697"/>
    </location>
</feature>
<feature type="region of interest" description="Disordered" evidence="3">
    <location>
        <begin position="732"/>
        <end position="775"/>
    </location>
</feature>
<feature type="region of interest" description="Disordered" evidence="3">
    <location>
        <begin position="1065"/>
        <end position="1084"/>
    </location>
</feature>
<feature type="region of interest" description="Disordered" evidence="3">
    <location>
        <begin position="1161"/>
        <end position="1228"/>
    </location>
</feature>
<feature type="region of interest" description="Disordered" evidence="3">
    <location>
        <begin position="1372"/>
        <end position="1422"/>
    </location>
</feature>
<feature type="compositionally biased region" description="Basic and acidic residues" evidence="3">
    <location>
        <begin position="381"/>
        <end position="405"/>
    </location>
</feature>
<feature type="compositionally biased region" description="Polar residues" evidence="3">
    <location>
        <begin position="644"/>
        <end position="663"/>
    </location>
</feature>
<feature type="compositionally biased region" description="Low complexity" evidence="3">
    <location>
        <begin position="678"/>
        <end position="687"/>
    </location>
</feature>
<feature type="compositionally biased region" description="Polar residues" evidence="3">
    <location>
        <begin position="764"/>
        <end position="773"/>
    </location>
</feature>
<gene>
    <name evidence="2" type="primary">Nexmif</name>
</gene>
<name>NEXMI_RAT</name>
<keyword id="KW-0963">Cytoplasm</keyword>
<keyword id="KW-0217">Developmental protein</keyword>
<keyword id="KW-0524">Neurogenesis</keyword>
<keyword id="KW-0539">Nucleus</keyword>
<keyword id="KW-1185">Reference proteome</keyword>
<keyword id="KW-0804">Transcription</keyword>
<keyword id="KW-0805">Transcription regulation</keyword>
<dbReference type="EMBL" id="AABR06105592">
    <property type="status" value="NOT_ANNOTATED_CDS"/>
    <property type="molecule type" value="Genomic_DNA"/>
</dbReference>
<dbReference type="RefSeq" id="NP_001300744.1">
    <property type="nucleotide sequence ID" value="NM_001313815.1"/>
</dbReference>
<dbReference type="RefSeq" id="XP_008771572.1">
    <property type="nucleotide sequence ID" value="XM_008773350.2"/>
</dbReference>
<dbReference type="RefSeq" id="XP_017457455.1">
    <property type="nucleotide sequence ID" value="XM_017601966.1"/>
</dbReference>
<dbReference type="RefSeq" id="XP_038955518.1">
    <property type="nucleotide sequence ID" value="XM_039099590.2"/>
</dbReference>
<dbReference type="RefSeq" id="XP_038955519.1">
    <property type="nucleotide sequence ID" value="XM_039099591.2"/>
</dbReference>
<dbReference type="RefSeq" id="XP_038955520.1">
    <property type="nucleotide sequence ID" value="XM_039099592.2"/>
</dbReference>
<dbReference type="FunCoup" id="D3ZGX1">
    <property type="interactions" value="324"/>
</dbReference>
<dbReference type="STRING" id="10116.ENSRNOP00000036176"/>
<dbReference type="iPTMnet" id="D3ZGX1"/>
<dbReference type="PhosphoSitePlus" id="D3ZGX1"/>
<dbReference type="PaxDb" id="10116-ENSRNOP00000036176"/>
<dbReference type="PeptideAtlas" id="D3ZGX1"/>
<dbReference type="Ensembl" id="ENSRNOT00000035653.7">
    <property type="protein sequence ID" value="ENSRNOP00000036176.4"/>
    <property type="gene ID" value="ENSRNOG00000021589.7"/>
</dbReference>
<dbReference type="GeneID" id="302396"/>
<dbReference type="KEGG" id="rno:302396"/>
<dbReference type="UCSC" id="RGD:1561931">
    <property type="organism name" value="rat"/>
</dbReference>
<dbReference type="AGR" id="RGD:1561931"/>
<dbReference type="CTD" id="340533"/>
<dbReference type="RGD" id="1561931">
    <property type="gene designation" value="Nexmif"/>
</dbReference>
<dbReference type="eggNOG" id="ENOG502QUMY">
    <property type="taxonomic scope" value="Eukaryota"/>
</dbReference>
<dbReference type="GeneTree" id="ENSGT00940000159746"/>
<dbReference type="HOGENOM" id="CLU_250004_0_0_1"/>
<dbReference type="InParanoid" id="D3ZGX1"/>
<dbReference type="OMA" id="ETHIFQK"/>
<dbReference type="OrthoDB" id="9878678at2759"/>
<dbReference type="PhylomeDB" id="D3ZGX1"/>
<dbReference type="TreeFam" id="TF332248"/>
<dbReference type="PRO" id="PR:D3ZGX1"/>
<dbReference type="Proteomes" id="UP000002494">
    <property type="component" value="Chromosome X"/>
</dbReference>
<dbReference type="Bgee" id="ENSRNOG00000021589">
    <property type="expression patterns" value="Expressed in brain and 8 other cell types or tissues"/>
</dbReference>
<dbReference type="GO" id="GO:0005737">
    <property type="term" value="C:cytoplasm"/>
    <property type="evidence" value="ECO:0007669"/>
    <property type="project" value="UniProtKB-SubCell"/>
</dbReference>
<dbReference type="GO" id="GO:0005634">
    <property type="term" value="C:nucleus"/>
    <property type="evidence" value="ECO:0000318"/>
    <property type="project" value="GO_Central"/>
</dbReference>
<dbReference type="GO" id="GO:0033629">
    <property type="term" value="P:negative regulation of cell adhesion mediated by integrin"/>
    <property type="evidence" value="ECO:0000315"/>
    <property type="project" value="RGD"/>
</dbReference>
<dbReference type="GO" id="GO:2000048">
    <property type="term" value="P:negative regulation of cell-cell adhesion mediated by cadherin"/>
    <property type="evidence" value="ECO:0000315"/>
    <property type="project" value="RGD"/>
</dbReference>
<dbReference type="GO" id="GO:0001953">
    <property type="term" value="P:negative regulation of cell-matrix adhesion"/>
    <property type="evidence" value="ECO:0000315"/>
    <property type="project" value="RGD"/>
</dbReference>
<dbReference type="GO" id="GO:2001223">
    <property type="term" value="P:negative regulation of neuron migration"/>
    <property type="evidence" value="ECO:0000315"/>
    <property type="project" value="RGD"/>
</dbReference>
<dbReference type="GO" id="GO:0007399">
    <property type="term" value="P:nervous system development"/>
    <property type="evidence" value="ECO:0007669"/>
    <property type="project" value="UniProtKB-KW"/>
</dbReference>
<dbReference type="InterPro" id="IPR032757">
    <property type="entry name" value="DUF4683"/>
</dbReference>
<dbReference type="InterPro" id="IPR042794">
    <property type="entry name" value="Nexmif"/>
</dbReference>
<dbReference type="PANTHER" id="PTHR46946">
    <property type="entry name" value="NEURITE EXTENSION AND MIGRATION FACTOR"/>
    <property type="match status" value="1"/>
</dbReference>
<dbReference type="PANTHER" id="PTHR46946:SF1">
    <property type="entry name" value="NEURITE EXTENSION AND MIGRATION FACTOR"/>
    <property type="match status" value="1"/>
</dbReference>
<dbReference type="Pfam" id="PF15735">
    <property type="entry name" value="DUF4683"/>
    <property type="match status" value="1"/>
</dbReference>